<keyword id="KW-1185">Reference proteome</keyword>
<sequence>MTHSCKCGDSCQCGDKCTCGPKETPKCGCSDCKCGDKCSSDCKCTSCTCKK</sequence>
<protein>
    <recommendedName>
        <fullName>Uncharacterized protein DDB_G0288281</fullName>
    </recommendedName>
</protein>
<name>Y7870_DICDI</name>
<organism>
    <name type="scientific">Dictyostelium discoideum</name>
    <name type="common">Social amoeba</name>
    <dbReference type="NCBI Taxonomy" id="44689"/>
    <lineage>
        <taxon>Eukaryota</taxon>
        <taxon>Amoebozoa</taxon>
        <taxon>Evosea</taxon>
        <taxon>Eumycetozoa</taxon>
        <taxon>Dictyostelia</taxon>
        <taxon>Dictyosteliales</taxon>
        <taxon>Dictyosteliaceae</taxon>
        <taxon>Dictyostelium</taxon>
    </lineage>
</organism>
<gene>
    <name type="ORF">DDB_G0288281</name>
</gene>
<reference key="1">
    <citation type="journal article" date="2005" name="Nature">
        <title>The genome of the social amoeba Dictyostelium discoideum.</title>
        <authorList>
            <person name="Eichinger L."/>
            <person name="Pachebat J.A."/>
            <person name="Gloeckner G."/>
            <person name="Rajandream M.A."/>
            <person name="Sucgang R."/>
            <person name="Berriman M."/>
            <person name="Song J."/>
            <person name="Olsen R."/>
            <person name="Szafranski K."/>
            <person name="Xu Q."/>
            <person name="Tunggal B."/>
            <person name="Kummerfeld S."/>
            <person name="Madera M."/>
            <person name="Konfortov B.A."/>
            <person name="Rivero F."/>
            <person name="Bankier A.T."/>
            <person name="Lehmann R."/>
            <person name="Hamlin N."/>
            <person name="Davies R."/>
            <person name="Gaudet P."/>
            <person name="Fey P."/>
            <person name="Pilcher K."/>
            <person name="Chen G."/>
            <person name="Saunders D."/>
            <person name="Sodergren E.J."/>
            <person name="Davis P."/>
            <person name="Kerhornou A."/>
            <person name="Nie X."/>
            <person name="Hall N."/>
            <person name="Anjard C."/>
            <person name="Hemphill L."/>
            <person name="Bason N."/>
            <person name="Farbrother P."/>
            <person name="Desany B."/>
            <person name="Just E."/>
            <person name="Morio T."/>
            <person name="Rost R."/>
            <person name="Churcher C.M."/>
            <person name="Cooper J."/>
            <person name="Haydock S."/>
            <person name="van Driessche N."/>
            <person name="Cronin A."/>
            <person name="Goodhead I."/>
            <person name="Muzny D.M."/>
            <person name="Mourier T."/>
            <person name="Pain A."/>
            <person name="Lu M."/>
            <person name="Harper D."/>
            <person name="Lindsay R."/>
            <person name="Hauser H."/>
            <person name="James K.D."/>
            <person name="Quiles M."/>
            <person name="Madan Babu M."/>
            <person name="Saito T."/>
            <person name="Buchrieser C."/>
            <person name="Wardroper A."/>
            <person name="Felder M."/>
            <person name="Thangavelu M."/>
            <person name="Johnson D."/>
            <person name="Knights A."/>
            <person name="Loulseged H."/>
            <person name="Mungall K.L."/>
            <person name="Oliver K."/>
            <person name="Price C."/>
            <person name="Quail M.A."/>
            <person name="Urushihara H."/>
            <person name="Hernandez J."/>
            <person name="Rabbinowitsch E."/>
            <person name="Steffen D."/>
            <person name="Sanders M."/>
            <person name="Ma J."/>
            <person name="Kohara Y."/>
            <person name="Sharp S."/>
            <person name="Simmonds M.N."/>
            <person name="Spiegler S."/>
            <person name="Tivey A."/>
            <person name="Sugano S."/>
            <person name="White B."/>
            <person name="Walker D."/>
            <person name="Woodward J.R."/>
            <person name="Winckler T."/>
            <person name="Tanaka Y."/>
            <person name="Shaulsky G."/>
            <person name="Schleicher M."/>
            <person name="Weinstock G.M."/>
            <person name="Rosenthal A."/>
            <person name="Cox E.C."/>
            <person name="Chisholm R.L."/>
            <person name="Gibbs R.A."/>
            <person name="Loomis W.F."/>
            <person name="Platzer M."/>
            <person name="Kay R.R."/>
            <person name="Williams J.G."/>
            <person name="Dear P.H."/>
            <person name="Noegel A.A."/>
            <person name="Barrell B.G."/>
            <person name="Kuspa A."/>
        </authorList>
    </citation>
    <scope>NUCLEOTIDE SEQUENCE [LARGE SCALE GENOMIC DNA]</scope>
    <source>
        <strain>AX4</strain>
    </source>
</reference>
<dbReference type="EMBL" id="AAFI02000109">
    <property type="protein sequence ID" value="EAL63283.2"/>
    <property type="molecule type" value="Genomic_DNA"/>
</dbReference>
<dbReference type="RefSeq" id="XP_636789.2">
    <property type="nucleotide sequence ID" value="XM_631697.2"/>
</dbReference>
<dbReference type="STRING" id="44689.Q54J58"/>
<dbReference type="EnsemblProtists" id="EAL63283">
    <property type="protein sequence ID" value="EAL63283"/>
    <property type="gene ID" value="DDB_G0288281"/>
</dbReference>
<dbReference type="GeneID" id="8626546"/>
<dbReference type="KEGG" id="ddi:DDB_G0288281"/>
<dbReference type="dictyBase" id="DDB_G0288281"/>
<dbReference type="HOGENOM" id="CLU_3096525_0_0_1"/>
<dbReference type="InParanoid" id="Q54J58"/>
<dbReference type="OMA" id="CACGNDP"/>
<dbReference type="PRO" id="PR:Q54J58"/>
<dbReference type="Proteomes" id="UP000002195">
    <property type="component" value="Chromosome 5"/>
</dbReference>
<dbReference type="InterPro" id="IPR049529">
    <property type="entry name" value="Zym1-like"/>
</dbReference>
<dbReference type="Pfam" id="PF12749">
    <property type="entry name" value="Metallothio_Euk"/>
    <property type="match status" value="1"/>
</dbReference>
<feature type="chain" id="PRO_0000346993" description="Uncharacterized protein DDB_G0288281">
    <location>
        <begin position="1"/>
        <end position="51"/>
    </location>
</feature>
<proteinExistence type="predicted"/>
<accession>Q54J58</accession>